<accession>Q7QB45</accession>
<dbReference type="EMBL" id="AAAB01008880">
    <property type="protein sequence ID" value="EAA08688.3"/>
    <property type="molecule type" value="Genomic_DNA"/>
</dbReference>
<dbReference type="SMR" id="Q7QB45"/>
<dbReference type="FunCoup" id="Q7QB45">
    <property type="interactions" value="1797"/>
</dbReference>
<dbReference type="STRING" id="7165.Q7QB45"/>
<dbReference type="PaxDb" id="7165-AGAP004191-PA"/>
<dbReference type="EnsemblMetazoa" id="AGAP004191-RA">
    <property type="protein sequence ID" value="AGAP004191-PA"/>
    <property type="gene ID" value="AGAP004191"/>
</dbReference>
<dbReference type="GeneID" id="1274026"/>
<dbReference type="KEGG" id="aga:1274026"/>
<dbReference type="CTD" id="6837"/>
<dbReference type="VEuPathDB" id="VectorBase:AGAMI1_003189"/>
<dbReference type="VEuPathDB" id="VectorBase:AGAP004191"/>
<dbReference type="eggNOG" id="KOG3304">
    <property type="taxonomic scope" value="Eukaryota"/>
</dbReference>
<dbReference type="HOGENOM" id="CLU_117242_2_0_1"/>
<dbReference type="InParanoid" id="Q7QB45"/>
<dbReference type="OMA" id="KQAECDQ"/>
<dbReference type="OrthoDB" id="203279at2759"/>
<dbReference type="PhylomeDB" id="Q7QB45"/>
<dbReference type="Proteomes" id="UP000007062">
    <property type="component" value="Chromosome 2R"/>
</dbReference>
<dbReference type="GO" id="GO:0016592">
    <property type="term" value="C:mediator complex"/>
    <property type="evidence" value="ECO:0000318"/>
    <property type="project" value="GO_Central"/>
</dbReference>
<dbReference type="GO" id="GO:0003712">
    <property type="term" value="F:transcription coregulator activity"/>
    <property type="evidence" value="ECO:0007669"/>
    <property type="project" value="InterPro"/>
</dbReference>
<dbReference type="GO" id="GO:0006357">
    <property type="term" value="P:regulation of transcription by RNA polymerase II"/>
    <property type="evidence" value="ECO:0007669"/>
    <property type="project" value="InterPro"/>
</dbReference>
<dbReference type="InterPro" id="IPR009332">
    <property type="entry name" value="Med22"/>
</dbReference>
<dbReference type="PANTHER" id="PTHR12434">
    <property type="entry name" value="MEDIATOR OF RNA POLYMERASE II TRANSCRIPTION SUBUNIT 22"/>
    <property type="match status" value="1"/>
</dbReference>
<dbReference type="PANTHER" id="PTHR12434:SF6">
    <property type="entry name" value="MEDIATOR OF RNA POLYMERASE II TRANSCRIPTION SUBUNIT 22"/>
    <property type="match status" value="1"/>
</dbReference>
<dbReference type="Pfam" id="PF06179">
    <property type="entry name" value="Med22"/>
    <property type="match status" value="1"/>
</dbReference>
<name>MED22_ANOGA</name>
<sequence length="138" mass="16162">MQRNLTQSKEALLKSYNSRLKEDIRSMRENFEEIIRLAKGENDTQLSKITQCEQDTYETQVRAANIVRAGESLMKLVSDIKQYLILNDFHSVNEAICSNSTLYRTTQIDRDNKLMAVRDDMAADLYDLEEEYYTSIYK</sequence>
<gene>
    <name type="primary">MED22</name>
    <name type="ORF">AGAP004191</name>
</gene>
<comment type="function">
    <text evidence="1">Component of the Mediator complex, a coactivator involved in the regulated transcription of nearly all RNA polymerase II-dependent genes. Mediator functions as a bridge to convey information from gene-specific regulatory proteins to the basal RNA polymerase II transcription machinery. Mediator is recruited to promoters by direct interactions with regulatory proteins and serves as a scaffold for the assembly of a functional preinitiation complex with RNA polymerase II and the general transcription factors (By similarity).</text>
</comment>
<comment type="subunit">
    <text evidence="1">Component of the Mediator complex.</text>
</comment>
<comment type="subcellular location">
    <subcellularLocation>
        <location evidence="3">Nucleus</location>
    </subcellularLocation>
</comment>
<comment type="similarity">
    <text evidence="3">Belongs to the Mediator complex subunit 22 family.</text>
</comment>
<proteinExistence type="inferred from homology"/>
<organism>
    <name type="scientific">Anopheles gambiae</name>
    <name type="common">African malaria mosquito</name>
    <dbReference type="NCBI Taxonomy" id="7165"/>
    <lineage>
        <taxon>Eukaryota</taxon>
        <taxon>Metazoa</taxon>
        <taxon>Ecdysozoa</taxon>
        <taxon>Arthropoda</taxon>
        <taxon>Hexapoda</taxon>
        <taxon>Insecta</taxon>
        <taxon>Pterygota</taxon>
        <taxon>Neoptera</taxon>
        <taxon>Endopterygota</taxon>
        <taxon>Diptera</taxon>
        <taxon>Nematocera</taxon>
        <taxon>Culicoidea</taxon>
        <taxon>Culicidae</taxon>
        <taxon>Anophelinae</taxon>
        <taxon>Anopheles</taxon>
    </lineage>
</organism>
<feature type="chain" id="PRO_0000308573" description="Mediator of RNA polymerase II transcription subunit 22">
    <location>
        <begin position="1"/>
        <end position="138"/>
    </location>
</feature>
<feature type="coiled-coil region" evidence="2">
    <location>
        <begin position="13"/>
        <end position="40"/>
    </location>
</feature>
<evidence type="ECO:0000250" key="1"/>
<evidence type="ECO:0000255" key="2"/>
<evidence type="ECO:0000305" key="3"/>
<reference key="1">
    <citation type="journal article" date="2002" name="Science">
        <title>The genome sequence of the malaria mosquito Anopheles gambiae.</title>
        <authorList>
            <person name="Holt R.A."/>
            <person name="Subramanian G.M."/>
            <person name="Halpern A."/>
            <person name="Sutton G.G."/>
            <person name="Charlab R."/>
            <person name="Nusskern D.R."/>
            <person name="Wincker P."/>
            <person name="Clark A.G."/>
            <person name="Ribeiro J.M.C."/>
            <person name="Wides R."/>
            <person name="Salzberg S.L."/>
            <person name="Loftus B.J."/>
            <person name="Yandell M.D."/>
            <person name="Majoros W.H."/>
            <person name="Rusch D.B."/>
            <person name="Lai Z."/>
            <person name="Kraft C.L."/>
            <person name="Abril J.F."/>
            <person name="Anthouard V."/>
            <person name="Arensburger P."/>
            <person name="Atkinson P.W."/>
            <person name="Baden H."/>
            <person name="de Berardinis V."/>
            <person name="Baldwin D."/>
            <person name="Benes V."/>
            <person name="Biedler J."/>
            <person name="Blass C."/>
            <person name="Bolanos R."/>
            <person name="Boscus D."/>
            <person name="Barnstead M."/>
            <person name="Cai S."/>
            <person name="Center A."/>
            <person name="Chaturverdi K."/>
            <person name="Christophides G.K."/>
            <person name="Chrystal M.A.M."/>
            <person name="Clamp M."/>
            <person name="Cravchik A."/>
            <person name="Curwen V."/>
            <person name="Dana A."/>
            <person name="Delcher A."/>
            <person name="Dew I."/>
            <person name="Evans C.A."/>
            <person name="Flanigan M."/>
            <person name="Grundschober-Freimoser A."/>
            <person name="Friedli L."/>
            <person name="Gu Z."/>
            <person name="Guan P."/>
            <person name="Guigo R."/>
            <person name="Hillenmeyer M.E."/>
            <person name="Hladun S.L."/>
            <person name="Hogan J.R."/>
            <person name="Hong Y.S."/>
            <person name="Hoover J."/>
            <person name="Jaillon O."/>
            <person name="Ke Z."/>
            <person name="Kodira C.D."/>
            <person name="Kokoza E."/>
            <person name="Koutsos A."/>
            <person name="Letunic I."/>
            <person name="Levitsky A.A."/>
            <person name="Liang Y."/>
            <person name="Lin J.-J."/>
            <person name="Lobo N.F."/>
            <person name="Lopez J.R."/>
            <person name="Malek J.A."/>
            <person name="McIntosh T.C."/>
            <person name="Meister S."/>
            <person name="Miller J.R."/>
            <person name="Mobarry C."/>
            <person name="Mongin E."/>
            <person name="Murphy S.D."/>
            <person name="O'Brochta D.A."/>
            <person name="Pfannkoch C."/>
            <person name="Qi R."/>
            <person name="Regier M.A."/>
            <person name="Remington K."/>
            <person name="Shao H."/>
            <person name="Sharakhova M.V."/>
            <person name="Sitter C.D."/>
            <person name="Shetty J."/>
            <person name="Smith T.J."/>
            <person name="Strong R."/>
            <person name="Sun J."/>
            <person name="Thomasova D."/>
            <person name="Ton L.Q."/>
            <person name="Topalis P."/>
            <person name="Tu Z.J."/>
            <person name="Unger M.F."/>
            <person name="Walenz B."/>
            <person name="Wang A.H."/>
            <person name="Wang J."/>
            <person name="Wang M."/>
            <person name="Wang X."/>
            <person name="Woodford K.J."/>
            <person name="Wortman J.R."/>
            <person name="Wu M."/>
            <person name="Yao A."/>
            <person name="Zdobnov E.M."/>
            <person name="Zhang H."/>
            <person name="Zhao Q."/>
            <person name="Zhao S."/>
            <person name="Zhu S.C."/>
            <person name="Zhimulev I."/>
            <person name="Coluzzi M."/>
            <person name="della Torre A."/>
            <person name="Roth C.W."/>
            <person name="Louis C."/>
            <person name="Kalush F."/>
            <person name="Mural R.J."/>
            <person name="Myers E.W."/>
            <person name="Adams M.D."/>
            <person name="Smith H.O."/>
            <person name="Broder S."/>
            <person name="Gardner M.J."/>
            <person name="Fraser C.M."/>
            <person name="Birney E."/>
            <person name="Bork P."/>
            <person name="Brey P.T."/>
            <person name="Venter J.C."/>
            <person name="Weissenbach J."/>
            <person name="Kafatos F.C."/>
            <person name="Collins F.H."/>
            <person name="Hoffman S.L."/>
        </authorList>
    </citation>
    <scope>NUCLEOTIDE SEQUENCE [LARGE SCALE GENOMIC DNA]</scope>
    <source>
        <strain>PEST</strain>
    </source>
</reference>
<keyword id="KW-0010">Activator</keyword>
<keyword id="KW-0175">Coiled coil</keyword>
<keyword id="KW-0539">Nucleus</keyword>
<keyword id="KW-1185">Reference proteome</keyword>
<keyword id="KW-0804">Transcription</keyword>
<keyword id="KW-0805">Transcription regulation</keyword>
<protein>
    <recommendedName>
        <fullName>Mediator of RNA polymerase II transcription subunit 22</fullName>
    </recommendedName>
    <alternativeName>
        <fullName>Mediator complex subunit 22</fullName>
    </alternativeName>
</protein>